<protein>
    <recommendedName>
        <fullName evidence="1">Chaperonin GroEL 2</fullName>
        <ecNumber evidence="1">5.6.1.7</ecNumber>
    </recommendedName>
    <alternativeName>
        <fullName evidence="1">60 kDa chaperonin 2</fullName>
    </alternativeName>
    <alternativeName>
        <fullName evidence="1">Chaperonin-60 2</fullName>
        <shortName evidence="1">Cpn60 2</shortName>
    </alternativeName>
</protein>
<evidence type="ECO:0000255" key="1">
    <source>
        <dbReference type="HAMAP-Rule" id="MF_00600"/>
    </source>
</evidence>
<sequence length="545" mass="57653">MAKRIIYNEQARRALERGIDILAESVAVTLGPKGRNVVLEKKFGAPQIINDGVTIAKEIELEDHIENTGVALIRQAASKTNDAAGDGTTTATVLAHAMVKAGLRNVAAGANAITLKKGIDKATEFLVGKIQENSKPISDSNAIAQCGTIAAGNDDEVGQMIANAMDKVGKEGVISLEEGKSMTTELEVTEGMRFDKGYISPYFATDTERMEAVLDEPYILLTDKKIALVQDLVPVLEQIAKTGKPLVIIAEDIEKEALATLVVNRLRGVLNVAAVKAPGFGDRRKAMLEDMAVLTNGQLITEDAGLKLENATLDMLGTGRRITINKETTTIVAEGNEQAVKARCDQIKKQMDETDSSYDKEKLQERLAKLAGGVAVIKVGAATETEMKDKKLRLEDAINATKAAVEEGIVPGGGTTLAHLSPILKEWADKNLEGEELIGANIVEASLTAPLMRIAENAGSNGAVIAENVKSKPFNDGFNAATGEYVDMSSAGIVDPAKVTRSGLQNAASIAGMVLTTECIVADLPEKKDAATPGGAPGMGGDFDY</sequence>
<proteinExistence type="inferred from homology"/>
<reference key="1">
    <citation type="journal article" date="2006" name="Science">
        <title>Genomic islands and the ecology and evolution of Prochlorococcus.</title>
        <authorList>
            <person name="Coleman M.L."/>
            <person name="Sullivan M.B."/>
            <person name="Martiny A.C."/>
            <person name="Steglich C."/>
            <person name="Barry K."/>
            <person name="Delong E.F."/>
            <person name="Chisholm S.W."/>
        </authorList>
    </citation>
    <scope>NUCLEOTIDE SEQUENCE [LARGE SCALE GENOMIC DNA]</scope>
    <source>
        <strain>MIT 9312</strain>
    </source>
</reference>
<dbReference type="EC" id="5.6.1.7" evidence="1"/>
<dbReference type="EMBL" id="CP000111">
    <property type="protein sequence ID" value="ABB50589.1"/>
    <property type="molecule type" value="Genomic_DNA"/>
</dbReference>
<dbReference type="RefSeq" id="WP_011377072.1">
    <property type="nucleotide sequence ID" value="NC_007577.1"/>
</dbReference>
<dbReference type="SMR" id="Q318V6"/>
<dbReference type="STRING" id="74546.PMT9312_1529"/>
<dbReference type="KEGG" id="pmi:PMT9312_1529"/>
<dbReference type="eggNOG" id="COG0459">
    <property type="taxonomic scope" value="Bacteria"/>
</dbReference>
<dbReference type="HOGENOM" id="CLU_016503_3_0_3"/>
<dbReference type="OrthoDB" id="9766614at2"/>
<dbReference type="Proteomes" id="UP000002715">
    <property type="component" value="Chromosome"/>
</dbReference>
<dbReference type="GO" id="GO:0005737">
    <property type="term" value="C:cytoplasm"/>
    <property type="evidence" value="ECO:0007669"/>
    <property type="project" value="UniProtKB-SubCell"/>
</dbReference>
<dbReference type="GO" id="GO:0005524">
    <property type="term" value="F:ATP binding"/>
    <property type="evidence" value="ECO:0007669"/>
    <property type="project" value="UniProtKB-UniRule"/>
</dbReference>
<dbReference type="GO" id="GO:0140662">
    <property type="term" value="F:ATP-dependent protein folding chaperone"/>
    <property type="evidence" value="ECO:0007669"/>
    <property type="project" value="InterPro"/>
</dbReference>
<dbReference type="GO" id="GO:0016853">
    <property type="term" value="F:isomerase activity"/>
    <property type="evidence" value="ECO:0007669"/>
    <property type="project" value="UniProtKB-KW"/>
</dbReference>
<dbReference type="GO" id="GO:0051082">
    <property type="term" value="F:unfolded protein binding"/>
    <property type="evidence" value="ECO:0007669"/>
    <property type="project" value="UniProtKB-UniRule"/>
</dbReference>
<dbReference type="GO" id="GO:0042026">
    <property type="term" value="P:protein refolding"/>
    <property type="evidence" value="ECO:0007669"/>
    <property type="project" value="UniProtKB-UniRule"/>
</dbReference>
<dbReference type="CDD" id="cd03344">
    <property type="entry name" value="GroEL"/>
    <property type="match status" value="1"/>
</dbReference>
<dbReference type="FunFam" id="3.50.7.10:FF:000001">
    <property type="entry name" value="60 kDa chaperonin"/>
    <property type="match status" value="1"/>
</dbReference>
<dbReference type="Gene3D" id="3.50.7.10">
    <property type="entry name" value="GroEL"/>
    <property type="match status" value="1"/>
</dbReference>
<dbReference type="Gene3D" id="1.10.560.10">
    <property type="entry name" value="GroEL-like equatorial domain"/>
    <property type="match status" value="1"/>
</dbReference>
<dbReference type="Gene3D" id="3.30.260.10">
    <property type="entry name" value="TCP-1-like chaperonin intermediate domain"/>
    <property type="match status" value="1"/>
</dbReference>
<dbReference type="HAMAP" id="MF_00600">
    <property type="entry name" value="CH60"/>
    <property type="match status" value="1"/>
</dbReference>
<dbReference type="InterPro" id="IPR018370">
    <property type="entry name" value="Chaperonin_Cpn60_CS"/>
</dbReference>
<dbReference type="InterPro" id="IPR001844">
    <property type="entry name" value="Cpn60/GroEL"/>
</dbReference>
<dbReference type="InterPro" id="IPR002423">
    <property type="entry name" value="Cpn60/GroEL/TCP-1"/>
</dbReference>
<dbReference type="InterPro" id="IPR027409">
    <property type="entry name" value="GroEL-like_apical_dom_sf"/>
</dbReference>
<dbReference type="InterPro" id="IPR027413">
    <property type="entry name" value="GROEL-like_equatorial_sf"/>
</dbReference>
<dbReference type="InterPro" id="IPR027410">
    <property type="entry name" value="TCP-1-like_intermed_sf"/>
</dbReference>
<dbReference type="NCBIfam" id="TIGR02348">
    <property type="entry name" value="GroEL"/>
    <property type="match status" value="1"/>
</dbReference>
<dbReference type="NCBIfam" id="NF000592">
    <property type="entry name" value="PRK00013.1"/>
    <property type="match status" value="1"/>
</dbReference>
<dbReference type="NCBIfam" id="NF009487">
    <property type="entry name" value="PRK12849.1"/>
    <property type="match status" value="1"/>
</dbReference>
<dbReference type="NCBIfam" id="NF009488">
    <property type="entry name" value="PRK12850.1"/>
    <property type="match status" value="1"/>
</dbReference>
<dbReference type="NCBIfam" id="NF009489">
    <property type="entry name" value="PRK12851.1"/>
    <property type="match status" value="1"/>
</dbReference>
<dbReference type="PANTHER" id="PTHR45633">
    <property type="entry name" value="60 KDA HEAT SHOCK PROTEIN, MITOCHONDRIAL"/>
    <property type="match status" value="1"/>
</dbReference>
<dbReference type="Pfam" id="PF00118">
    <property type="entry name" value="Cpn60_TCP1"/>
    <property type="match status" value="1"/>
</dbReference>
<dbReference type="PRINTS" id="PR00298">
    <property type="entry name" value="CHAPERONIN60"/>
</dbReference>
<dbReference type="SUPFAM" id="SSF52029">
    <property type="entry name" value="GroEL apical domain-like"/>
    <property type="match status" value="1"/>
</dbReference>
<dbReference type="SUPFAM" id="SSF48592">
    <property type="entry name" value="GroEL equatorial domain-like"/>
    <property type="match status" value="2"/>
</dbReference>
<dbReference type="PROSITE" id="PS00296">
    <property type="entry name" value="CHAPERONINS_CPN60"/>
    <property type="match status" value="1"/>
</dbReference>
<name>CH602_PROM9</name>
<comment type="function">
    <text evidence="1">Together with its co-chaperonin GroES, plays an essential role in assisting protein folding. The GroEL-GroES system forms a nano-cage that allows encapsulation of the non-native substrate proteins and provides a physical environment optimized to promote and accelerate protein folding.</text>
</comment>
<comment type="catalytic activity">
    <reaction evidence="1">
        <text>ATP + H2O + a folded polypeptide = ADP + phosphate + an unfolded polypeptide.</text>
        <dbReference type="EC" id="5.6.1.7"/>
    </reaction>
</comment>
<comment type="subunit">
    <text evidence="1">Forms a cylinder of 14 subunits composed of two heptameric rings stacked back-to-back. Interacts with the co-chaperonin GroES.</text>
</comment>
<comment type="subcellular location">
    <subcellularLocation>
        <location evidence="1">Cytoplasm</location>
    </subcellularLocation>
</comment>
<comment type="similarity">
    <text evidence="1">Belongs to the chaperonin (HSP60) family.</text>
</comment>
<gene>
    <name evidence="1" type="primary">groEL2</name>
    <name evidence="1" type="synonym">groL2</name>
    <name type="ordered locus">PMT9312_1529</name>
</gene>
<feature type="chain" id="PRO_0000256947" description="Chaperonin GroEL 2">
    <location>
        <begin position="1"/>
        <end position="545"/>
    </location>
</feature>
<feature type="binding site" evidence="1">
    <location>
        <begin position="29"/>
        <end position="32"/>
    </location>
    <ligand>
        <name>ATP</name>
        <dbReference type="ChEBI" id="CHEBI:30616"/>
    </ligand>
</feature>
<feature type="binding site" evidence="1">
    <location>
        <begin position="86"/>
        <end position="90"/>
    </location>
    <ligand>
        <name>ATP</name>
        <dbReference type="ChEBI" id="CHEBI:30616"/>
    </ligand>
</feature>
<feature type="binding site" evidence="1">
    <location>
        <position position="413"/>
    </location>
    <ligand>
        <name>ATP</name>
        <dbReference type="ChEBI" id="CHEBI:30616"/>
    </ligand>
</feature>
<feature type="binding site" evidence="1">
    <location>
        <begin position="479"/>
        <end position="481"/>
    </location>
    <ligand>
        <name>ATP</name>
        <dbReference type="ChEBI" id="CHEBI:30616"/>
    </ligand>
</feature>
<feature type="binding site" evidence="1">
    <location>
        <position position="495"/>
    </location>
    <ligand>
        <name>ATP</name>
        <dbReference type="ChEBI" id="CHEBI:30616"/>
    </ligand>
</feature>
<accession>Q318V6</accession>
<organism>
    <name type="scientific">Prochlorococcus marinus (strain MIT 9312)</name>
    <dbReference type="NCBI Taxonomy" id="74546"/>
    <lineage>
        <taxon>Bacteria</taxon>
        <taxon>Bacillati</taxon>
        <taxon>Cyanobacteriota</taxon>
        <taxon>Cyanophyceae</taxon>
        <taxon>Synechococcales</taxon>
        <taxon>Prochlorococcaceae</taxon>
        <taxon>Prochlorococcus</taxon>
    </lineage>
</organism>
<keyword id="KW-0067">ATP-binding</keyword>
<keyword id="KW-0143">Chaperone</keyword>
<keyword id="KW-0963">Cytoplasm</keyword>
<keyword id="KW-0413">Isomerase</keyword>
<keyword id="KW-0547">Nucleotide-binding</keyword>